<evidence type="ECO:0000255" key="1">
    <source>
        <dbReference type="HAMAP-Rule" id="MF_01618"/>
    </source>
</evidence>
<gene>
    <name evidence="1" type="primary">fadI</name>
    <name type="ordered locus">SPAB_00578</name>
</gene>
<dbReference type="EC" id="2.3.1.16" evidence="1"/>
<dbReference type="EMBL" id="CP000886">
    <property type="protein sequence ID" value="ABX66004.1"/>
    <property type="molecule type" value="Genomic_DNA"/>
</dbReference>
<dbReference type="RefSeq" id="WP_001248113.1">
    <property type="nucleotide sequence ID" value="NC_010102.1"/>
</dbReference>
<dbReference type="SMR" id="A9N452"/>
<dbReference type="KEGG" id="spq:SPAB_00578"/>
<dbReference type="PATRIC" id="fig|1016998.12.peg.542"/>
<dbReference type="HOGENOM" id="CLU_031026_2_0_6"/>
<dbReference type="BioCyc" id="SENT1016998:SPAB_RS02385-MONOMER"/>
<dbReference type="UniPathway" id="UPA00659"/>
<dbReference type="Proteomes" id="UP000008556">
    <property type="component" value="Chromosome"/>
</dbReference>
<dbReference type="GO" id="GO:0005829">
    <property type="term" value="C:cytosol"/>
    <property type="evidence" value="ECO:0007669"/>
    <property type="project" value="TreeGrafter"/>
</dbReference>
<dbReference type="GO" id="GO:0003988">
    <property type="term" value="F:acetyl-CoA C-acyltransferase activity"/>
    <property type="evidence" value="ECO:0007669"/>
    <property type="project" value="UniProtKB-UniRule"/>
</dbReference>
<dbReference type="GO" id="GO:0006635">
    <property type="term" value="P:fatty acid beta-oxidation"/>
    <property type="evidence" value="ECO:0007669"/>
    <property type="project" value="UniProtKB-UniRule"/>
</dbReference>
<dbReference type="CDD" id="cd00751">
    <property type="entry name" value="thiolase"/>
    <property type="match status" value="1"/>
</dbReference>
<dbReference type="FunFam" id="3.40.47.10:FF:000011">
    <property type="entry name" value="3-ketoacyl-CoA thiolase"/>
    <property type="match status" value="1"/>
</dbReference>
<dbReference type="Gene3D" id="3.40.47.10">
    <property type="match status" value="1"/>
</dbReference>
<dbReference type="HAMAP" id="MF_01618">
    <property type="entry name" value="FadI"/>
    <property type="match status" value="1"/>
</dbReference>
<dbReference type="InterPro" id="IPR012806">
    <property type="entry name" value="Ac-CoA_C-AcTrfase_FadI"/>
</dbReference>
<dbReference type="InterPro" id="IPR002155">
    <property type="entry name" value="Thiolase"/>
</dbReference>
<dbReference type="InterPro" id="IPR016039">
    <property type="entry name" value="Thiolase-like"/>
</dbReference>
<dbReference type="InterPro" id="IPR020615">
    <property type="entry name" value="Thiolase_acyl_enz_int_AS"/>
</dbReference>
<dbReference type="InterPro" id="IPR020610">
    <property type="entry name" value="Thiolase_AS"/>
</dbReference>
<dbReference type="InterPro" id="IPR020617">
    <property type="entry name" value="Thiolase_C"/>
</dbReference>
<dbReference type="InterPro" id="IPR020613">
    <property type="entry name" value="Thiolase_CS"/>
</dbReference>
<dbReference type="InterPro" id="IPR020616">
    <property type="entry name" value="Thiolase_N"/>
</dbReference>
<dbReference type="NCBIfam" id="TIGR01930">
    <property type="entry name" value="AcCoA-C-Actrans"/>
    <property type="match status" value="1"/>
</dbReference>
<dbReference type="NCBIfam" id="TIGR02446">
    <property type="entry name" value="FadI"/>
    <property type="match status" value="1"/>
</dbReference>
<dbReference type="NCBIfam" id="NF006516">
    <property type="entry name" value="PRK08963.1"/>
    <property type="match status" value="1"/>
</dbReference>
<dbReference type="PANTHER" id="PTHR18919:SF107">
    <property type="entry name" value="ACETYL-COA ACETYLTRANSFERASE, CYTOSOLIC"/>
    <property type="match status" value="1"/>
</dbReference>
<dbReference type="PANTHER" id="PTHR18919">
    <property type="entry name" value="ACETYL-COA C-ACYLTRANSFERASE"/>
    <property type="match status" value="1"/>
</dbReference>
<dbReference type="Pfam" id="PF02803">
    <property type="entry name" value="Thiolase_C"/>
    <property type="match status" value="1"/>
</dbReference>
<dbReference type="Pfam" id="PF00108">
    <property type="entry name" value="Thiolase_N"/>
    <property type="match status" value="1"/>
</dbReference>
<dbReference type="PIRSF" id="PIRSF000429">
    <property type="entry name" value="Ac-CoA_Ac_transf"/>
    <property type="match status" value="1"/>
</dbReference>
<dbReference type="SUPFAM" id="SSF53901">
    <property type="entry name" value="Thiolase-like"/>
    <property type="match status" value="2"/>
</dbReference>
<dbReference type="PROSITE" id="PS00098">
    <property type="entry name" value="THIOLASE_1"/>
    <property type="match status" value="1"/>
</dbReference>
<dbReference type="PROSITE" id="PS00737">
    <property type="entry name" value="THIOLASE_2"/>
    <property type="match status" value="1"/>
</dbReference>
<dbReference type="PROSITE" id="PS00099">
    <property type="entry name" value="THIOLASE_3"/>
    <property type="match status" value="1"/>
</dbReference>
<sequence length="436" mass="46472">MRQALPLVTRQGDRIAIVSGLRTPFARQATAFHGIPAVDLGKMVVGELLARSEIPADAIEQLVFGQVVQMPEAPNIAREIVLGTGMNVHTDAYSVSRACATSFQAVANVAESLMAGTIRAGIAGGADSSSVLPIGVSKALARVLVDGNKARTTRQRLTLFSRLRLRDLLPVPPAVAEYSTGLRMGDTAEQMAKTYGITREQQDALAHRSHQRAAQAWAEGKLAEEVMTTYVPPYKNPFAEDNNIRGASTLADYAKLRPAFDRKHGSVTAANSTPLTDGAAAVIMMTESRAKELGLRPLGYLRSYAFTAIDVWQDMLLGPAWSTPLALERAGLTMADLTLFDMHEAFAAQTLANLQLLGSERFAREVLGRAQATGEVDDAKFNVLGGSIAYGHPFAATGARMITQTLHELRRRGGGFGLVTACAAGGLGAAMVLEAE</sequence>
<name>FADI_SALPB</name>
<reference key="1">
    <citation type="submission" date="2007-11" db="EMBL/GenBank/DDBJ databases">
        <authorList>
            <consortium name="The Salmonella enterica serovar Paratyphi B Genome Sequencing Project"/>
            <person name="McClelland M."/>
            <person name="Sanderson E.K."/>
            <person name="Porwollik S."/>
            <person name="Spieth J."/>
            <person name="Clifton W.S."/>
            <person name="Fulton R."/>
            <person name="Cordes M."/>
            <person name="Wollam A."/>
            <person name="Shah N."/>
            <person name="Pepin K."/>
            <person name="Bhonagiri V."/>
            <person name="Nash W."/>
            <person name="Johnson M."/>
            <person name="Thiruvilangam P."/>
            <person name="Wilson R."/>
        </authorList>
    </citation>
    <scope>NUCLEOTIDE SEQUENCE [LARGE SCALE GENOMIC DNA]</scope>
    <source>
        <strain>ATCC BAA-1250 / SPB7</strain>
    </source>
</reference>
<proteinExistence type="inferred from homology"/>
<comment type="function">
    <text evidence="1">Catalyzes the final step of fatty acid oxidation in which acetyl-CoA is released and the CoA ester of a fatty acid two carbons shorter is formed.</text>
</comment>
<comment type="catalytic activity">
    <reaction evidence="1">
        <text>an acyl-CoA + acetyl-CoA = a 3-oxoacyl-CoA + CoA</text>
        <dbReference type="Rhea" id="RHEA:21564"/>
        <dbReference type="ChEBI" id="CHEBI:57287"/>
        <dbReference type="ChEBI" id="CHEBI:57288"/>
        <dbReference type="ChEBI" id="CHEBI:58342"/>
        <dbReference type="ChEBI" id="CHEBI:90726"/>
        <dbReference type="EC" id="2.3.1.16"/>
    </reaction>
</comment>
<comment type="pathway">
    <text evidence="1">Lipid metabolism; fatty acid beta-oxidation.</text>
</comment>
<comment type="subunit">
    <text evidence="1">Heterotetramer of two alpha chains (FadJ) and two beta chains (FadI).</text>
</comment>
<comment type="subcellular location">
    <subcellularLocation>
        <location evidence="1">Cytoplasm</location>
    </subcellularLocation>
</comment>
<comment type="similarity">
    <text evidence="1">Belongs to the thiolase-like superfamily. Thiolase family.</text>
</comment>
<protein>
    <recommendedName>
        <fullName evidence="1">3-ketoacyl-CoA thiolase</fullName>
        <ecNumber evidence="1">2.3.1.16</ecNumber>
    </recommendedName>
    <alternativeName>
        <fullName evidence="1">ACSs</fullName>
    </alternativeName>
    <alternativeName>
        <fullName evidence="1">Acetyl-CoA acyltransferase</fullName>
    </alternativeName>
    <alternativeName>
        <fullName evidence="1">Acyl-CoA ligase</fullName>
    </alternativeName>
    <alternativeName>
        <fullName evidence="1">Beta-ketothiolase</fullName>
    </alternativeName>
    <alternativeName>
        <fullName evidence="1">Fatty acid oxidation complex subunit beta</fullName>
    </alternativeName>
</protein>
<organism>
    <name type="scientific">Salmonella paratyphi B (strain ATCC BAA-1250 / SPB7)</name>
    <dbReference type="NCBI Taxonomy" id="1016998"/>
    <lineage>
        <taxon>Bacteria</taxon>
        <taxon>Pseudomonadati</taxon>
        <taxon>Pseudomonadota</taxon>
        <taxon>Gammaproteobacteria</taxon>
        <taxon>Enterobacterales</taxon>
        <taxon>Enterobacteriaceae</taxon>
        <taxon>Salmonella</taxon>
    </lineage>
</organism>
<accession>A9N452</accession>
<feature type="chain" id="PRO_1000088066" description="3-ketoacyl-CoA thiolase">
    <location>
        <begin position="1"/>
        <end position="436"/>
    </location>
</feature>
<feature type="active site" description="Acyl-thioester intermediate" evidence="1">
    <location>
        <position position="99"/>
    </location>
</feature>
<feature type="active site" description="Proton acceptor" evidence="1">
    <location>
        <position position="392"/>
    </location>
</feature>
<feature type="active site" description="Proton acceptor" evidence="1">
    <location>
        <position position="422"/>
    </location>
</feature>
<keyword id="KW-0012">Acyltransferase</keyword>
<keyword id="KW-0963">Cytoplasm</keyword>
<keyword id="KW-0276">Fatty acid metabolism</keyword>
<keyword id="KW-0442">Lipid degradation</keyword>
<keyword id="KW-0443">Lipid metabolism</keyword>
<keyword id="KW-0808">Transferase</keyword>